<protein>
    <recommendedName>
        <fullName evidence="1">UPF0283 membrane protein Ent638_2153</fullName>
    </recommendedName>
</protein>
<organism>
    <name type="scientific">Enterobacter sp. (strain 638)</name>
    <dbReference type="NCBI Taxonomy" id="399742"/>
    <lineage>
        <taxon>Bacteria</taxon>
        <taxon>Pseudomonadati</taxon>
        <taxon>Pseudomonadota</taxon>
        <taxon>Gammaproteobacteria</taxon>
        <taxon>Enterobacterales</taxon>
        <taxon>Enterobacteriaceae</taxon>
        <taxon>Enterobacter</taxon>
    </lineage>
</organism>
<evidence type="ECO:0000255" key="1">
    <source>
        <dbReference type="HAMAP-Rule" id="MF_01085"/>
    </source>
</evidence>
<proteinExistence type="inferred from homology"/>
<sequence>MTEPLKPRIDFPGTLEQERAEAFKAAQAFSGPQAENFAPAVAEELLSDEGPAEAVVEAALRPKRSLWRKMVTAGLTLFGISVVGQGVQWTMNAWQTQDWVALGGCAAGALIIGAGVGSVATEWRRLWRLRQRAHERDEARDLFHSHATGKGRAFCEKLASQAGIDQSHPALQRWYAAIHETQSDREIVSLYASIVQPVLDSQARREISRSAAESTLMIAVSPLALVDMAFIAWRNLRLINRIARLYGIELGYYSRLRLFRLVLLNMAFAGASELVREVGMDWMSQDLAARLSTRAAQGIGAGLLTARLGIKAMELCRPLPWLNDDKPRLGDFRRELIGQLKETLSKKPQ</sequence>
<name>Y2153_ENT38</name>
<keyword id="KW-0997">Cell inner membrane</keyword>
<keyword id="KW-1003">Cell membrane</keyword>
<keyword id="KW-0472">Membrane</keyword>
<keyword id="KW-0812">Transmembrane</keyword>
<keyword id="KW-1133">Transmembrane helix</keyword>
<dbReference type="EMBL" id="CP000653">
    <property type="protein sequence ID" value="ABP60828.1"/>
    <property type="molecule type" value="Genomic_DNA"/>
</dbReference>
<dbReference type="RefSeq" id="WP_012017543.1">
    <property type="nucleotide sequence ID" value="NC_009436.1"/>
</dbReference>
<dbReference type="STRING" id="399742.Ent638_2153"/>
<dbReference type="KEGG" id="ent:Ent638_2153"/>
<dbReference type="eggNOG" id="COG3768">
    <property type="taxonomic scope" value="Bacteria"/>
</dbReference>
<dbReference type="HOGENOM" id="CLU_057693_2_0_6"/>
<dbReference type="OrthoDB" id="958025at2"/>
<dbReference type="Proteomes" id="UP000000230">
    <property type="component" value="Chromosome"/>
</dbReference>
<dbReference type="GO" id="GO:0005886">
    <property type="term" value="C:plasma membrane"/>
    <property type="evidence" value="ECO:0007669"/>
    <property type="project" value="UniProtKB-SubCell"/>
</dbReference>
<dbReference type="HAMAP" id="MF_01085">
    <property type="entry name" value="UPF0283"/>
    <property type="match status" value="1"/>
</dbReference>
<dbReference type="InterPro" id="IPR021147">
    <property type="entry name" value="DUF697"/>
</dbReference>
<dbReference type="InterPro" id="IPR006507">
    <property type="entry name" value="UPF0283"/>
</dbReference>
<dbReference type="NCBIfam" id="TIGR01620">
    <property type="entry name" value="hyp_HI0043"/>
    <property type="match status" value="1"/>
</dbReference>
<dbReference type="PANTHER" id="PTHR39342">
    <property type="entry name" value="UPF0283 MEMBRANE PROTEIN YCJF"/>
    <property type="match status" value="1"/>
</dbReference>
<dbReference type="PANTHER" id="PTHR39342:SF1">
    <property type="entry name" value="UPF0283 MEMBRANE PROTEIN YCJF"/>
    <property type="match status" value="1"/>
</dbReference>
<dbReference type="Pfam" id="PF05128">
    <property type="entry name" value="DUF697"/>
    <property type="match status" value="1"/>
</dbReference>
<gene>
    <name type="ordered locus">Ent638_2153</name>
</gene>
<comment type="subcellular location">
    <subcellularLocation>
        <location evidence="1">Cell inner membrane</location>
        <topology evidence="1">Multi-pass membrane protein</topology>
    </subcellularLocation>
</comment>
<comment type="similarity">
    <text evidence="1">Belongs to the UPF0283 family.</text>
</comment>
<reference key="1">
    <citation type="journal article" date="2010" name="PLoS Genet.">
        <title>Genome sequence of the plant growth promoting endophytic bacterium Enterobacter sp. 638.</title>
        <authorList>
            <person name="Taghavi S."/>
            <person name="van der Lelie D."/>
            <person name="Hoffman A."/>
            <person name="Zhang Y.B."/>
            <person name="Walla M.D."/>
            <person name="Vangronsveld J."/>
            <person name="Newman L."/>
            <person name="Monchy S."/>
        </authorList>
    </citation>
    <scope>NUCLEOTIDE SEQUENCE [LARGE SCALE GENOMIC DNA]</scope>
    <source>
        <strain>638</strain>
    </source>
</reference>
<accession>A4WAU8</accession>
<feature type="chain" id="PRO_1000064840" description="UPF0283 membrane protein Ent638_2153">
    <location>
        <begin position="1"/>
        <end position="349"/>
    </location>
</feature>
<feature type="transmembrane region" description="Helical" evidence="1">
    <location>
        <begin position="70"/>
        <end position="90"/>
    </location>
</feature>
<feature type="transmembrane region" description="Helical" evidence="1">
    <location>
        <begin position="99"/>
        <end position="119"/>
    </location>
</feature>
<feature type="transmembrane region" description="Helical" evidence="1">
    <location>
        <begin position="213"/>
        <end position="233"/>
    </location>
</feature>